<name>EST2_RABIT</name>
<accession>P14943</accession>
<evidence type="ECO:0000250" key="1">
    <source>
        <dbReference type="UniProtKB" id="O00748"/>
    </source>
</evidence>
<evidence type="ECO:0000250" key="2">
    <source>
        <dbReference type="UniProtKB" id="P23141"/>
    </source>
</evidence>
<evidence type="ECO:0000255" key="3"/>
<evidence type="ECO:0000255" key="4">
    <source>
        <dbReference type="PROSITE-ProRule" id="PRU10039"/>
    </source>
</evidence>
<evidence type="ECO:0000269" key="5">
    <source>
    </source>
</evidence>
<evidence type="ECO:0000305" key="6"/>
<dbReference type="EC" id="3.1.1.84" evidence="1"/>
<dbReference type="EC" id="3.1.1.1"/>
<dbReference type="PIR" id="A34329">
    <property type="entry name" value="A34329"/>
</dbReference>
<dbReference type="SMR" id="P14943"/>
<dbReference type="FunCoup" id="P14943">
    <property type="interactions" value="293"/>
</dbReference>
<dbReference type="STRING" id="9986.ENSOCUP00000012531"/>
<dbReference type="ESTHER" id="rabit-2cxes">
    <property type="family name" value="Carb_B_Chordata"/>
</dbReference>
<dbReference type="MEROPS" id="S09.956"/>
<dbReference type="GlyCosmos" id="P14943">
    <property type="glycosylation" value="1 site, No reported glycans"/>
</dbReference>
<dbReference type="PaxDb" id="9986-ENSOCUP00000012531"/>
<dbReference type="eggNOG" id="KOG1516">
    <property type="taxonomic scope" value="Eukaryota"/>
</dbReference>
<dbReference type="InParanoid" id="P14943"/>
<dbReference type="Proteomes" id="UP000001811">
    <property type="component" value="Unplaced"/>
</dbReference>
<dbReference type="GO" id="GO:0005788">
    <property type="term" value="C:endoplasmic reticulum lumen"/>
    <property type="evidence" value="ECO:0007669"/>
    <property type="project" value="UniProtKB-SubCell"/>
</dbReference>
<dbReference type="GO" id="GO:0106435">
    <property type="term" value="F:carboxylesterase activity"/>
    <property type="evidence" value="ECO:0007669"/>
    <property type="project" value="UniProtKB-EC"/>
</dbReference>
<dbReference type="GO" id="GO:0006629">
    <property type="term" value="P:lipid metabolic process"/>
    <property type="evidence" value="ECO:0007669"/>
    <property type="project" value="UniProtKB-KW"/>
</dbReference>
<dbReference type="CDD" id="cd00312">
    <property type="entry name" value="Esterase_lipase"/>
    <property type="match status" value="1"/>
</dbReference>
<dbReference type="FunFam" id="3.40.50.1820:FF:000011">
    <property type="entry name" value="Carboxylic ester hydrolase"/>
    <property type="match status" value="1"/>
</dbReference>
<dbReference type="Gene3D" id="3.40.50.1820">
    <property type="entry name" value="alpha/beta hydrolase"/>
    <property type="match status" value="1"/>
</dbReference>
<dbReference type="InterPro" id="IPR029058">
    <property type="entry name" value="AB_hydrolase_fold"/>
</dbReference>
<dbReference type="InterPro" id="IPR002018">
    <property type="entry name" value="CarbesteraseB"/>
</dbReference>
<dbReference type="InterPro" id="IPR019826">
    <property type="entry name" value="Carboxylesterase_B_AS"/>
</dbReference>
<dbReference type="InterPro" id="IPR019819">
    <property type="entry name" value="Carboxylesterase_B_CS"/>
</dbReference>
<dbReference type="InterPro" id="IPR050309">
    <property type="entry name" value="Type-B_Carboxylest/Lipase"/>
</dbReference>
<dbReference type="PANTHER" id="PTHR11559">
    <property type="entry name" value="CARBOXYLESTERASE"/>
    <property type="match status" value="1"/>
</dbReference>
<dbReference type="Pfam" id="PF00135">
    <property type="entry name" value="COesterase"/>
    <property type="match status" value="1"/>
</dbReference>
<dbReference type="SUPFAM" id="SSF53474">
    <property type="entry name" value="alpha/beta-Hydrolases"/>
    <property type="match status" value="1"/>
</dbReference>
<dbReference type="PROSITE" id="PS00122">
    <property type="entry name" value="CARBOXYLESTERASE_B_1"/>
    <property type="match status" value="1"/>
</dbReference>
<dbReference type="PROSITE" id="PS00941">
    <property type="entry name" value="CARBOXYLESTERASE_B_2"/>
    <property type="match status" value="1"/>
</dbReference>
<comment type="function">
    <text evidence="1">Involved in the detoxification of xenobiotics and in the activation of ester and amide prodrugs. Converts monoacylglycerides to free fatty acids and glycerol. Hydrolyzes of 2-arachidonoylglycerol and prostaglandins (By similarity).</text>
</comment>
<comment type="catalytic activity">
    <reaction evidence="4">
        <text>a carboxylic ester + H2O = an alcohol + a carboxylate + H(+)</text>
        <dbReference type="Rhea" id="RHEA:21164"/>
        <dbReference type="ChEBI" id="CHEBI:15377"/>
        <dbReference type="ChEBI" id="CHEBI:15378"/>
        <dbReference type="ChEBI" id="CHEBI:29067"/>
        <dbReference type="ChEBI" id="CHEBI:30879"/>
        <dbReference type="ChEBI" id="CHEBI:33308"/>
        <dbReference type="EC" id="3.1.1.1"/>
    </reaction>
</comment>
<comment type="catalytic activity">
    <reaction evidence="1">
        <text>cocaine + H2O = ecgonine methyl ester + benzoate + H(+)</text>
        <dbReference type="Rhea" id="RHEA:27506"/>
        <dbReference type="ChEBI" id="CHEBI:15377"/>
        <dbReference type="ChEBI" id="CHEBI:15378"/>
        <dbReference type="ChEBI" id="CHEBI:16150"/>
        <dbReference type="ChEBI" id="CHEBI:59908"/>
        <dbReference type="ChEBI" id="CHEBI:60056"/>
        <dbReference type="EC" id="3.1.1.84"/>
    </reaction>
</comment>
<comment type="catalytic activity">
    <reaction evidence="1">
        <text>2-(5Z,8Z,11Z,14Z-eicosatetraenoyl)-glycerol + H2O = glycerol + (5Z,8Z,11Z,14Z)-eicosatetraenoate + H(+)</text>
        <dbReference type="Rhea" id="RHEA:26132"/>
        <dbReference type="ChEBI" id="CHEBI:15377"/>
        <dbReference type="ChEBI" id="CHEBI:15378"/>
        <dbReference type="ChEBI" id="CHEBI:17754"/>
        <dbReference type="ChEBI" id="CHEBI:32395"/>
        <dbReference type="ChEBI" id="CHEBI:52392"/>
    </reaction>
    <physiologicalReaction direction="left-to-right" evidence="1">
        <dbReference type="Rhea" id="RHEA:26133"/>
    </physiologicalReaction>
</comment>
<comment type="catalytic activity">
    <reaction evidence="1">
        <text>prostaglandin E2 1-glyceryl ester + H2O = prostaglandin E2 + glycerol + H(+)</text>
        <dbReference type="Rhea" id="RHEA:48296"/>
        <dbReference type="ChEBI" id="CHEBI:15377"/>
        <dbReference type="ChEBI" id="CHEBI:15378"/>
        <dbReference type="ChEBI" id="CHEBI:17754"/>
        <dbReference type="ChEBI" id="CHEBI:90230"/>
        <dbReference type="ChEBI" id="CHEBI:606564"/>
    </reaction>
    <physiologicalReaction direction="left-to-right" evidence="1">
        <dbReference type="Rhea" id="RHEA:48297"/>
    </physiologicalReaction>
</comment>
<comment type="catalytic activity">
    <reaction evidence="1">
        <text>prostaglandin F2alpha 1-glyceryl ester + H2O = prostaglandin F2alpha + glycerol + H(+)</text>
        <dbReference type="Rhea" id="RHEA:48300"/>
        <dbReference type="ChEBI" id="CHEBI:15377"/>
        <dbReference type="ChEBI" id="CHEBI:15378"/>
        <dbReference type="ChEBI" id="CHEBI:17754"/>
        <dbReference type="ChEBI" id="CHEBI:57404"/>
        <dbReference type="ChEBI" id="CHEBI:90233"/>
    </reaction>
    <physiologicalReaction direction="left-to-right" evidence="1">
        <dbReference type="Rhea" id="RHEA:48301"/>
    </physiologicalReaction>
</comment>
<comment type="subunit">
    <text>Monomer.</text>
</comment>
<comment type="subcellular location">
    <subcellularLocation>
        <location evidence="1">Endoplasmic reticulum lumen</location>
    </subcellularLocation>
</comment>
<comment type="similarity">
    <text evidence="6">Belongs to the type-B carboxylesterase/lipase family.</text>
</comment>
<sequence length="532" mass="59059">QDSASPIRNTHTGQVRGSLVHVEGTDAGVHTFLGIPFAKPPLGPLRFAPPEPAEAWSGVRDGTSLPAMCLQNLAIMDQDVLLLHFTPPSIPMSEDCLYLNIYSPAHAREGSDLPVMVWIHGGGLTMGMASMYDGSALAAFEDVVVVTIQYRLGVLGFFSTGDQHATGNHGYLDQVAALRWVQKNIAHFGGNPGRVTIFGESAGGTSVSSHVLSPMSQGLFHGAIMESLVALLPGLITSSSEVVSTVVANLSRCGQVDSETLVRCLRAKSEEEMLAITQVFMLIPGVVDGVFLPRHPEELLALADFQPVPSIIGINNDEYGWIIPKLLLAIDPQEERDRQAMREIMHQATKQLMLPPALGDLLMDEYMGSNEDPKHLMAQFQEMMADAMFVMPALRVAHLQRSHAPTYFYEFQHRPSFTKDLRPPHVRADHGDEVVFVFRSHLFGSKVPLTEEEELLSRRVMKYWANFARNRNPNGEGLAHWPLFDLDQRYLQLNMQPAVGQALKARRLQFWTHTLPQRVQELRGTEQKHTEL</sequence>
<organism>
    <name type="scientific">Oryctolagus cuniculus</name>
    <name type="common">Rabbit</name>
    <dbReference type="NCBI Taxonomy" id="9986"/>
    <lineage>
        <taxon>Eukaryota</taxon>
        <taxon>Metazoa</taxon>
        <taxon>Chordata</taxon>
        <taxon>Craniata</taxon>
        <taxon>Vertebrata</taxon>
        <taxon>Euteleostomi</taxon>
        <taxon>Mammalia</taxon>
        <taxon>Eutheria</taxon>
        <taxon>Euarchontoglires</taxon>
        <taxon>Glires</taxon>
        <taxon>Lagomorpha</taxon>
        <taxon>Leporidae</taxon>
        <taxon>Oryctolagus</taxon>
    </lineage>
</organism>
<feature type="chain" id="PRO_0000070278" description="Cocaine esterase">
    <location>
        <begin position="1"/>
        <end position="532"/>
    </location>
</feature>
<feature type="short sequence motif" description="Prevents secretion from ER" evidence="3">
    <location>
        <begin position="529"/>
        <end position="532"/>
    </location>
</feature>
<feature type="active site" description="Acyl-ester intermediate" evidence="4">
    <location>
        <position position="201"/>
    </location>
</feature>
<feature type="active site" description="Charge relay system" evidence="2">
    <location>
        <position position="318"/>
    </location>
</feature>
<feature type="active site" description="Charge relay system" evidence="2">
    <location>
        <position position="430"/>
    </location>
</feature>
<feature type="modified residue" description="Pyrrolidone carboxylic acid" evidence="5">
    <location>
        <position position="1"/>
    </location>
</feature>
<feature type="glycosylation site" description="N-linked (GlcNAc...) asparagine">
    <location>
        <position position="249"/>
    </location>
</feature>
<feature type="disulfide bond" evidence="2">
    <location>
        <begin position="69"/>
        <end position="96"/>
    </location>
</feature>
<feature type="disulfide bond" evidence="2">
    <location>
        <begin position="253"/>
        <end position="264"/>
    </location>
</feature>
<reference key="1">
    <citation type="journal article" date="1989" name="J. Biol. Chem.">
        <title>Isolation, properties, and the complete amino acid sequence of a second form of 60-kDa glycoprotein esterase. Orientation of the 60-kDa proteins in the microsomal membrane.</title>
        <authorList>
            <person name="Ozols J."/>
        </authorList>
    </citation>
    <scope>PROTEIN SEQUENCE</scope>
    <scope>PYROGLUTAMATE FORMATION AT GLN-1</scope>
    <source>
        <tissue>Liver</tissue>
    </source>
</reference>
<protein>
    <recommendedName>
        <fullName evidence="1">Cocaine esterase</fullName>
        <ecNumber evidence="1">3.1.1.84</ecNumber>
    </recommendedName>
    <alternativeName>
        <fullName>Liver carboxylesterase 2</fullName>
        <ecNumber>3.1.1.1</ecNumber>
    </alternativeName>
</protein>
<gene>
    <name type="primary">CES2</name>
    <name type="synonym">ICE</name>
</gene>
<keyword id="KW-0903">Direct protein sequencing</keyword>
<keyword id="KW-1015">Disulfide bond</keyword>
<keyword id="KW-0256">Endoplasmic reticulum</keyword>
<keyword id="KW-0325">Glycoprotein</keyword>
<keyword id="KW-0378">Hydrolase</keyword>
<keyword id="KW-0443">Lipid metabolism</keyword>
<keyword id="KW-0873">Pyrrolidone carboxylic acid</keyword>
<keyword id="KW-1185">Reference proteome</keyword>
<keyword id="KW-0719">Serine esterase</keyword>
<proteinExistence type="evidence at protein level"/>